<name>R23A2_CAEEL</name>
<reference key="1">
    <citation type="journal article" date="1998" name="Science">
        <title>Genome sequence of the nematode C. elegans: a platform for investigating biology.</title>
        <authorList>
            <consortium name="The C. elegans sequencing consortium"/>
        </authorList>
    </citation>
    <scope>NUCLEOTIDE SEQUENCE [LARGE SCALE GENOMIC DNA]</scope>
    <source>
        <strain>Bristol N2</strain>
    </source>
</reference>
<dbReference type="EMBL" id="Z75541">
    <property type="protein sequence ID" value="CAA99858.1"/>
    <property type="molecule type" value="Genomic_DNA"/>
</dbReference>
<dbReference type="PIR" id="T22496">
    <property type="entry name" value="T22496"/>
</dbReference>
<dbReference type="RefSeq" id="NP_492263.1">
    <property type="nucleotide sequence ID" value="NM_059862.3"/>
</dbReference>
<dbReference type="PDB" id="9BH5">
    <property type="method" value="EM"/>
    <property type="resolution" value="2.63 A"/>
    <property type="chains" value="CX=1-146"/>
</dbReference>
<dbReference type="PDB" id="9CAI">
    <property type="method" value="EM"/>
    <property type="resolution" value="2.59 A"/>
    <property type="chains" value="CX=1-146"/>
</dbReference>
<dbReference type="PDBsum" id="9BH5"/>
<dbReference type="PDBsum" id="9CAI"/>
<dbReference type="EMDB" id="EMD-44533"/>
<dbReference type="EMDB" id="EMD-45392"/>
<dbReference type="SMR" id="Q20647"/>
<dbReference type="BioGRID" id="38051">
    <property type="interactions" value="99"/>
</dbReference>
<dbReference type="DIP" id="DIP-27075N"/>
<dbReference type="FunCoup" id="Q20647">
    <property type="interactions" value="1733"/>
</dbReference>
<dbReference type="STRING" id="6239.F52B5.6.5"/>
<dbReference type="iPTMnet" id="Q20647"/>
<dbReference type="PaxDb" id="6239-F52B5.6.4"/>
<dbReference type="PeptideAtlas" id="Q20647"/>
<dbReference type="EnsemblMetazoa" id="F52B5.6.1">
    <property type="protein sequence ID" value="F52B5.6.1"/>
    <property type="gene ID" value="WBGene00004439"/>
</dbReference>
<dbReference type="EnsemblMetazoa" id="F52B5.6.2">
    <property type="protein sequence ID" value="F52B5.6.2"/>
    <property type="gene ID" value="WBGene00004439"/>
</dbReference>
<dbReference type="EnsemblMetazoa" id="F52B5.6.3">
    <property type="protein sequence ID" value="F52B5.6.3"/>
    <property type="gene ID" value="WBGene00004439"/>
</dbReference>
<dbReference type="EnsemblMetazoa" id="F52B5.6.4">
    <property type="protein sequence ID" value="F52B5.6.4"/>
    <property type="gene ID" value="WBGene00004439"/>
</dbReference>
<dbReference type="UCSC" id="F52B5.6.1">
    <property type="organism name" value="c. elegans"/>
</dbReference>
<dbReference type="AGR" id="WB:WBGene00004439"/>
<dbReference type="WormBase" id="F52B5.6">
    <property type="protein sequence ID" value="CE05721"/>
    <property type="gene ID" value="WBGene00004439"/>
    <property type="gene designation" value="rpl-23A.2"/>
</dbReference>
<dbReference type="eggNOG" id="KOG1751">
    <property type="taxonomic scope" value="Eukaryota"/>
</dbReference>
<dbReference type="GeneTree" id="ENSGT00970000196251"/>
<dbReference type="HOGENOM" id="CLU_037562_0_2_1"/>
<dbReference type="InParanoid" id="Q20647"/>
<dbReference type="OMA" id="RLDHHKV"/>
<dbReference type="OrthoDB" id="1267328at2759"/>
<dbReference type="PhylomeDB" id="Q20647"/>
<dbReference type="Reactome" id="R-CEL-156827">
    <property type="pathway name" value="L13a-mediated translational silencing of Ceruloplasmin expression"/>
</dbReference>
<dbReference type="Reactome" id="R-CEL-1799339">
    <property type="pathway name" value="SRP-dependent cotranslational protein targeting to membrane"/>
</dbReference>
<dbReference type="Reactome" id="R-CEL-72689">
    <property type="pathway name" value="Formation of a pool of free 40S subunits"/>
</dbReference>
<dbReference type="Reactome" id="R-CEL-72706">
    <property type="pathway name" value="GTP hydrolysis and joining of the 60S ribosomal subunit"/>
</dbReference>
<dbReference type="Reactome" id="R-CEL-975956">
    <property type="pathway name" value="Nonsense Mediated Decay (NMD) independent of the Exon Junction Complex (EJC)"/>
</dbReference>
<dbReference type="Reactome" id="R-CEL-975957">
    <property type="pathway name" value="Nonsense Mediated Decay (NMD) enhanced by the Exon Junction Complex (EJC)"/>
</dbReference>
<dbReference type="PRO" id="PR:Q20647"/>
<dbReference type="Proteomes" id="UP000001940">
    <property type="component" value="Chromosome I"/>
</dbReference>
<dbReference type="Bgee" id="WBGene00004439">
    <property type="expression patterns" value="Expressed in germ line (C elegans) and 4 other cell types or tissues"/>
</dbReference>
<dbReference type="GO" id="GO:0022625">
    <property type="term" value="C:cytosolic large ribosomal subunit"/>
    <property type="evidence" value="ECO:0000318"/>
    <property type="project" value="GO_Central"/>
</dbReference>
<dbReference type="GO" id="GO:0019843">
    <property type="term" value="F:rRNA binding"/>
    <property type="evidence" value="ECO:0007669"/>
    <property type="project" value="UniProtKB-KW"/>
</dbReference>
<dbReference type="GO" id="GO:0003735">
    <property type="term" value="F:structural constituent of ribosome"/>
    <property type="evidence" value="ECO:0000318"/>
    <property type="project" value="GO_Central"/>
</dbReference>
<dbReference type="GO" id="GO:0006412">
    <property type="term" value="P:translation"/>
    <property type="evidence" value="ECO:0007669"/>
    <property type="project" value="InterPro"/>
</dbReference>
<dbReference type="FunFam" id="3.30.70.330:FF:000035">
    <property type="entry name" value="60S ribosomal protein L23a"/>
    <property type="match status" value="1"/>
</dbReference>
<dbReference type="Gene3D" id="3.30.70.330">
    <property type="match status" value="1"/>
</dbReference>
<dbReference type="HAMAP" id="MF_01369_A">
    <property type="entry name" value="Ribosomal_uL23_A"/>
    <property type="match status" value="1"/>
</dbReference>
<dbReference type="InterPro" id="IPR012677">
    <property type="entry name" value="Nucleotide-bd_a/b_plait_sf"/>
</dbReference>
<dbReference type="InterPro" id="IPR019985">
    <property type="entry name" value="Ribosomal_uL23"/>
</dbReference>
<dbReference type="InterPro" id="IPR013025">
    <property type="entry name" value="Ribosomal_uL23-like"/>
</dbReference>
<dbReference type="InterPro" id="IPR012678">
    <property type="entry name" value="Ribosomal_uL23/eL15/eS24_sf"/>
</dbReference>
<dbReference type="InterPro" id="IPR001014">
    <property type="entry name" value="Ribosomal_uL23_CS"/>
</dbReference>
<dbReference type="InterPro" id="IPR005633">
    <property type="entry name" value="Ribosomal_uL23_N"/>
</dbReference>
<dbReference type="NCBIfam" id="NF011118">
    <property type="entry name" value="PRK14548.1"/>
    <property type="match status" value="1"/>
</dbReference>
<dbReference type="NCBIfam" id="TIGR03636">
    <property type="entry name" value="uL23_arch"/>
    <property type="match status" value="1"/>
</dbReference>
<dbReference type="PANTHER" id="PTHR11620">
    <property type="entry name" value="60S RIBOSOMAL PROTEIN L23A"/>
    <property type="match status" value="1"/>
</dbReference>
<dbReference type="Pfam" id="PF00276">
    <property type="entry name" value="Ribosomal_L23"/>
    <property type="match status" value="1"/>
</dbReference>
<dbReference type="Pfam" id="PF03939">
    <property type="entry name" value="Ribosomal_L23eN"/>
    <property type="match status" value="1"/>
</dbReference>
<dbReference type="SUPFAM" id="SSF54189">
    <property type="entry name" value="Ribosomal proteins S24e, L23 and L15e"/>
    <property type="match status" value="1"/>
</dbReference>
<dbReference type="PROSITE" id="PS00050">
    <property type="entry name" value="RIBOSOMAL_L23"/>
    <property type="match status" value="1"/>
</dbReference>
<feature type="chain" id="PRO_0000129471" description="Large ribosomal subunit protein uL23B">
    <location>
        <begin position="1"/>
        <end position="146"/>
    </location>
</feature>
<feature type="region of interest" description="Disordered" evidence="2">
    <location>
        <begin position="1"/>
        <end position="22"/>
    </location>
</feature>
<gene>
    <name type="primary">rpl-23A.2</name>
    <name type="ORF">F52B5.6</name>
</gene>
<organism>
    <name type="scientific">Caenorhabditis elegans</name>
    <dbReference type="NCBI Taxonomy" id="6239"/>
    <lineage>
        <taxon>Eukaryota</taxon>
        <taxon>Metazoa</taxon>
        <taxon>Ecdysozoa</taxon>
        <taxon>Nematoda</taxon>
        <taxon>Chromadorea</taxon>
        <taxon>Rhabditida</taxon>
        <taxon>Rhabditina</taxon>
        <taxon>Rhabditomorpha</taxon>
        <taxon>Rhabditoidea</taxon>
        <taxon>Rhabditidae</taxon>
        <taxon>Peloderinae</taxon>
        <taxon>Caenorhabditis</taxon>
    </lineage>
</organism>
<keyword id="KW-0002">3D-structure</keyword>
<keyword id="KW-1185">Reference proteome</keyword>
<keyword id="KW-0687">Ribonucleoprotein</keyword>
<keyword id="KW-0689">Ribosomal protein</keyword>
<keyword id="KW-0694">RNA-binding</keyword>
<keyword id="KW-0699">rRNA-binding</keyword>
<sequence length="146" mass="16283">MAPSSNKVGKAIQAKKAVVKGSKTNVRKNVRTSVHFRRPKTLVTARAPRYARKSAPARDKLDSFAVIKAPHTTESSMKKIEDHNTLVFIVDEKANKHHIKRAVHALYNVKAVKVNTLITPLQQKKAYVRLASDYDALDVANKIGFI</sequence>
<proteinExistence type="evidence at protein level"/>
<comment type="function">
    <text evidence="1">This protein binds to a specific region on the 26S rRNA.</text>
</comment>
<comment type="similarity">
    <text evidence="3">Belongs to the universal ribosomal protein uL23 family.</text>
</comment>
<evidence type="ECO:0000250" key="1"/>
<evidence type="ECO:0000256" key="2">
    <source>
        <dbReference type="SAM" id="MobiDB-lite"/>
    </source>
</evidence>
<evidence type="ECO:0000305" key="3"/>
<protein>
    <recommendedName>
        <fullName evidence="3">Large ribosomal subunit protein uL23B</fullName>
    </recommendedName>
    <alternativeName>
        <fullName>60S ribosomal protein L23a 2</fullName>
    </alternativeName>
</protein>
<accession>Q20647</accession>